<comment type="function">
    <text evidence="1">Involved in transcription antitermination. Required for transcription of ribosomal RNA (rRNA) genes. Binds specifically to the boxA antiterminator sequence of the ribosomal RNA (rrn) operons.</text>
</comment>
<comment type="similarity">
    <text evidence="1">Belongs to the NusB family.</text>
</comment>
<reference key="1">
    <citation type="submission" date="2008-07" db="EMBL/GenBank/DDBJ databases">
        <title>Complete sequence of Geobacter bemidjiensis BEM.</title>
        <authorList>
            <consortium name="US DOE Joint Genome Institute"/>
            <person name="Lucas S."/>
            <person name="Copeland A."/>
            <person name="Lapidus A."/>
            <person name="Glavina del Rio T."/>
            <person name="Dalin E."/>
            <person name="Tice H."/>
            <person name="Bruce D."/>
            <person name="Goodwin L."/>
            <person name="Pitluck S."/>
            <person name="Kiss H."/>
            <person name="Brettin T."/>
            <person name="Detter J.C."/>
            <person name="Han C."/>
            <person name="Kuske C.R."/>
            <person name="Schmutz J."/>
            <person name="Larimer F."/>
            <person name="Land M."/>
            <person name="Hauser L."/>
            <person name="Kyrpides N."/>
            <person name="Lykidis A."/>
            <person name="Lovley D."/>
            <person name="Richardson P."/>
        </authorList>
    </citation>
    <scope>NUCLEOTIDE SEQUENCE [LARGE SCALE GENOMIC DNA]</scope>
    <source>
        <strain>ATCC BAA-1014 / DSM 16622 / JCM 12645 / Bem</strain>
    </source>
</reference>
<organism>
    <name type="scientific">Citrifermentans bemidjiense (strain ATCC BAA-1014 / DSM 16622 / JCM 12645 / Bem)</name>
    <name type="common">Geobacter bemidjiensis</name>
    <dbReference type="NCBI Taxonomy" id="404380"/>
    <lineage>
        <taxon>Bacteria</taxon>
        <taxon>Pseudomonadati</taxon>
        <taxon>Thermodesulfobacteriota</taxon>
        <taxon>Desulfuromonadia</taxon>
        <taxon>Geobacterales</taxon>
        <taxon>Geobacteraceae</taxon>
        <taxon>Citrifermentans</taxon>
    </lineage>
</organism>
<accession>B5E853</accession>
<name>NUSB_CITBB</name>
<evidence type="ECO:0000255" key="1">
    <source>
        <dbReference type="HAMAP-Rule" id="MF_00073"/>
    </source>
</evidence>
<feature type="chain" id="PRO_1000092554" description="Transcription antitermination protein NusB">
    <location>
        <begin position="1"/>
        <end position="145"/>
    </location>
</feature>
<proteinExistence type="inferred from homology"/>
<keyword id="KW-1185">Reference proteome</keyword>
<keyword id="KW-0694">RNA-binding</keyword>
<keyword id="KW-0804">Transcription</keyword>
<keyword id="KW-0889">Transcription antitermination</keyword>
<keyword id="KW-0805">Transcription regulation</keyword>
<dbReference type="EMBL" id="CP001124">
    <property type="protein sequence ID" value="ACH40022.1"/>
    <property type="molecule type" value="Genomic_DNA"/>
</dbReference>
<dbReference type="RefSeq" id="WP_012531453.1">
    <property type="nucleotide sequence ID" value="NC_011146.1"/>
</dbReference>
<dbReference type="SMR" id="B5E853"/>
<dbReference type="STRING" id="404380.Gbem_3020"/>
<dbReference type="KEGG" id="gbm:Gbem_3020"/>
<dbReference type="eggNOG" id="COG0781">
    <property type="taxonomic scope" value="Bacteria"/>
</dbReference>
<dbReference type="HOGENOM" id="CLU_087843_3_3_7"/>
<dbReference type="OrthoDB" id="9797817at2"/>
<dbReference type="Proteomes" id="UP000008825">
    <property type="component" value="Chromosome"/>
</dbReference>
<dbReference type="GO" id="GO:0005829">
    <property type="term" value="C:cytosol"/>
    <property type="evidence" value="ECO:0007669"/>
    <property type="project" value="TreeGrafter"/>
</dbReference>
<dbReference type="GO" id="GO:0003723">
    <property type="term" value="F:RNA binding"/>
    <property type="evidence" value="ECO:0007669"/>
    <property type="project" value="UniProtKB-UniRule"/>
</dbReference>
<dbReference type="GO" id="GO:0006353">
    <property type="term" value="P:DNA-templated transcription termination"/>
    <property type="evidence" value="ECO:0007669"/>
    <property type="project" value="UniProtKB-UniRule"/>
</dbReference>
<dbReference type="GO" id="GO:0031564">
    <property type="term" value="P:transcription antitermination"/>
    <property type="evidence" value="ECO:0007669"/>
    <property type="project" value="UniProtKB-KW"/>
</dbReference>
<dbReference type="CDD" id="cd00619">
    <property type="entry name" value="Terminator_NusB"/>
    <property type="match status" value="1"/>
</dbReference>
<dbReference type="Gene3D" id="1.10.940.10">
    <property type="entry name" value="NusB-like"/>
    <property type="match status" value="1"/>
</dbReference>
<dbReference type="HAMAP" id="MF_00073">
    <property type="entry name" value="NusB"/>
    <property type="match status" value="1"/>
</dbReference>
<dbReference type="InterPro" id="IPR035926">
    <property type="entry name" value="NusB-like_sf"/>
</dbReference>
<dbReference type="InterPro" id="IPR011605">
    <property type="entry name" value="NusB_fam"/>
</dbReference>
<dbReference type="InterPro" id="IPR006027">
    <property type="entry name" value="NusB_RsmB_TIM44"/>
</dbReference>
<dbReference type="NCBIfam" id="TIGR01951">
    <property type="entry name" value="nusB"/>
    <property type="match status" value="1"/>
</dbReference>
<dbReference type="PANTHER" id="PTHR11078:SF3">
    <property type="entry name" value="ANTITERMINATION NUSB DOMAIN-CONTAINING PROTEIN"/>
    <property type="match status" value="1"/>
</dbReference>
<dbReference type="PANTHER" id="PTHR11078">
    <property type="entry name" value="N UTILIZATION SUBSTANCE PROTEIN B-RELATED"/>
    <property type="match status" value="1"/>
</dbReference>
<dbReference type="Pfam" id="PF01029">
    <property type="entry name" value="NusB"/>
    <property type="match status" value="1"/>
</dbReference>
<dbReference type="SUPFAM" id="SSF48013">
    <property type="entry name" value="NusB-like"/>
    <property type="match status" value="1"/>
</dbReference>
<gene>
    <name evidence="1" type="primary">nusB</name>
    <name type="ordered locus">Gbem_3020</name>
</gene>
<protein>
    <recommendedName>
        <fullName evidence="1">Transcription antitermination protein NusB</fullName>
    </recommendedName>
    <alternativeName>
        <fullName evidence="1">Antitermination factor NusB</fullName>
    </alternativeName>
</protein>
<sequence>MTTRREGRELALQALYSKDLVLQDANTTLKRITESFSEGEEPTLSVNSKAYAFASELVNGVVSNLQAIDSRIAEKSKHWSMARMARVDLNILRLAVFELLYRPDIPKNVTMNEAIEVAKKFGADDSASFVNGILDEIASTVTDKE</sequence>